<organism>
    <name type="scientific">Coxiella burnetii (strain CbuG_Q212)</name>
    <name type="common">Coxiella burnetii (strain Q212)</name>
    <dbReference type="NCBI Taxonomy" id="434923"/>
    <lineage>
        <taxon>Bacteria</taxon>
        <taxon>Pseudomonadati</taxon>
        <taxon>Pseudomonadota</taxon>
        <taxon>Gammaproteobacteria</taxon>
        <taxon>Legionellales</taxon>
        <taxon>Coxiellaceae</taxon>
        <taxon>Coxiella</taxon>
    </lineage>
</organism>
<reference key="1">
    <citation type="journal article" date="2009" name="Infect. Immun.">
        <title>Comparative genomics reveal extensive transposon-mediated genomic plasticity and diversity among potential effector proteins within the genus Coxiella.</title>
        <authorList>
            <person name="Beare P.A."/>
            <person name="Unsworth N."/>
            <person name="Andoh M."/>
            <person name="Voth D.E."/>
            <person name="Omsland A."/>
            <person name="Gilk S.D."/>
            <person name="Williams K.P."/>
            <person name="Sobral B.W."/>
            <person name="Kupko J.J. III"/>
            <person name="Porcella S.F."/>
            <person name="Samuel J.E."/>
            <person name="Heinzen R.A."/>
        </authorList>
    </citation>
    <scope>NUCLEOTIDE SEQUENCE [LARGE SCALE GENOMIC DNA]</scope>
    <source>
        <strain>CbuG_Q212</strain>
    </source>
</reference>
<accession>B6J1S9</accession>
<keyword id="KW-0687">Ribonucleoprotein</keyword>
<keyword id="KW-0689">Ribosomal protein</keyword>
<sequence>MAHKKAGGSTRNGRDSNPKMLGVKRFGGERVLAGNIIVRQRGTHYRPGENMGMGRDHTLYALIEGKVKFTRKGPKKRNFVSIEPLEESQP</sequence>
<proteinExistence type="inferred from homology"/>
<evidence type="ECO:0000255" key="1">
    <source>
        <dbReference type="HAMAP-Rule" id="MF_00539"/>
    </source>
</evidence>
<evidence type="ECO:0000256" key="2">
    <source>
        <dbReference type="SAM" id="MobiDB-lite"/>
    </source>
</evidence>
<evidence type="ECO:0000305" key="3"/>
<gene>
    <name evidence="1" type="primary">rpmA</name>
    <name type="ordered locus">CbuG_1621</name>
</gene>
<name>RL27_COXB2</name>
<comment type="similarity">
    <text evidence="1">Belongs to the bacterial ribosomal protein bL27 family.</text>
</comment>
<feature type="chain" id="PRO_1000128728" description="Large ribosomal subunit protein bL27">
    <location>
        <begin position="1"/>
        <end position="90"/>
    </location>
</feature>
<feature type="region of interest" description="Disordered" evidence="2">
    <location>
        <begin position="1"/>
        <end position="22"/>
    </location>
</feature>
<dbReference type="EMBL" id="CP001019">
    <property type="protein sequence ID" value="ACJ18907.1"/>
    <property type="molecule type" value="Genomic_DNA"/>
</dbReference>
<dbReference type="RefSeq" id="WP_005771977.1">
    <property type="nucleotide sequence ID" value="NC_011527.1"/>
</dbReference>
<dbReference type="SMR" id="B6J1S9"/>
<dbReference type="KEGG" id="cbg:CbuG_1621"/>
<dbReference type="HOGENOM" id="CLU_095424_4_1_6"/>
<dbReference type="GO" id="GO:0022625">
    <property type="term" value="C:cytosolic large ribosomal subunit"/>
    <property type="evidence" value="ECO:0007669"/>
    <property type="project" value="TreeGrafter"/>
</dbReference>
<dbReference type="GO" id="GO:0003735">
    <property type="term" value="F:structural constituent of ribosome"/>
    <property type="evidence" value="ECO:0007669"/>
    <property type="project" value="InterPro"/>
</dbReference>
<dbReference type="GO" id="GO:0006412">
    <property type="term" value="P:translation"/>
    <property type="evidence" value="ECO:0007669"/>
    <property type="project" value="UniProtKB-UniRule"/>
</dbReference>
<dbReference type="FunFam" id="2.40.50.100:FF:000001">
    <property type="entry name" value="50S ribosomal protein L27"/>
    <property type="match status" value="1"/>
</dbReference>
<dbReference type="Gene3D" id="2.40.50.100">
    <property type="match status" value="1"/>
</dbReference>
<dbReference type="HAMAP" id="MF_00539">
    <property type="entry name" value="Ribosomal_bL27"/>
    <property type="match status" value="1"/>
</dbReference>
<dbReference type="InterPro" id="IPR001684">
    <property type="entry name" value="Ribosomal_bL27"/>
</dbReference>
<dbReference type="InterPro" id="IPR018261">
    <property type="entry name" value="Ribosomal_bL27_CS"/>
</dbReference>
<dbReference type="NCBIfam" id="TIGR00062">
    <property type="entry name" value="L27"/>
    <property type="match status" value="1"/>
</dbReference>
<dbReference type="PANTHER" id="PTHR15893:SF0">
    <property type="entry name" value="LARGE RIBOSOMAL SUBUNIT PROTEIN BL27M"/>
    <property type="match status" value="1"/>
</dbReference>
<dbReference type="PANTHER" id="PTHR15893">
    <property type="entry name" value="RIBOSOMAL PROTEIN L27"/>
    <property type="match status" value="1"/>
</dbReference>
<dbReference type="Pfam" id="PF01016">
    <property type="entry name" value="Ribosomal_L27"/>
    <property type="match status" value="1"/>
</dbReference>
<dbReference type="PRINTS" id="PR00063">
    <property type="entry name" value="RIBOSOMALL27"/>
</dbReference>
<dbReference type="SUPFAM" id="SSF110324">
    <property type="entry name" value="Ribosomal L27 protein-like"/>
    <property type="match status" value="1"/>
</dbReference>
<dbReference type="PROSITE" id="PS00831">
    <property type="entry name" value="RIBOSOMAL_L27"/>
    <property type="match status" value="1"/>
</dbReference>
<protein>
    <recommendedName>
        <fullName evidence="1">Large ribosomal subunit protein bL27</fullName>
    </recommendedName>
    <alternativeName>
        <fullName evidence="3">50S ribosomal protein L27</fullName>
    </alternativeName>
</protein>